<gene>
    <name evidence="1" type="primary">hisA</name>
    <name type="ordered locus">HH_0826</name>
</gene>
<protein>
    <recommendedName>
        <fullName evidence="1">1-(5-phosphoribosyl)-5-[(5-phosphoribosylamino)methylideneamino] imidazole-4-carboxamide isomerase</fullName>
        <ecNumber evidence="1">5.3.1.16</ecNumber>
    </recommendedName>
    <alternativeName>
        <fullName evidence="1">Phosphoribosylformimino-5-aminoimidazole carboxamide ribotide isomerase</fullName>
    </alternativeName>
</protein>
<feature type="chain" id="PRO_0000142011" description="1-(5-phosphoribosyl)-5-[(5-phosphoribosylamino)methylideneamino] imidazole-4-carboxamide isomerase">
    <location>
        <begin position="1"/>
        <end position="243"/>
    </location>
</feature>
<feature type="active site" description="Proton acceptor" evidence="1">
    <location>
        <position position="10"/>
    </location>
</feature>
<feature type="active site" description="Proton donor" evidence="1">
    <location>
        <position position="128"/>
    </location>
</feature>
<keyword id="KW-0028">Amino-acid biosynthesis</keyword>
<keyword id="KW-0963">Cytoplasm</keyword>
<keyword id="KW-0368">Histidine biosynthesis</keyword>
<keyword id="KW-0413">Isomerase</keyword>
<keyword id="KW-1185">Reference proteome</keyword>
<dbReference type="EC" id="5.3.1.16" evidence="1"/>
<dbReference type="EMBL" id="AE017125">
    <property type="protein sequence ID" value="AAP77423.1"/>
    <property type="molecule type" value="Genomic_DNA"/>
</dbReference>
<dbReference type="RefSeq" id="WP_011115666.1">
    <property type="nucleotide sequence ID" value="NC_004917.1"/>
</dbReference>
<dbReference type="SMR" id="Q7VHY5"/>
<dbReference type="STRING" id="235279.HH_0826"/>
<dbReference type="KEGG" id="hhe:HH_0826"/>
<dbReference type="eggNOG" id="COG0106">
    <property type="taxonomic scope" value="Bacteria"/>
</dbReference>
<dbReference type="HOGENOM" id="CLU_048577_1_2_7"/>
<dbReference type="OrthoDB" id="9807749at2"/>
<dbReference type="UniPathway" id="UPA00031">
    <property type="reaction ID" value="UER00009"/>
</dbReference>
<dbReference type="Proteomes" id="UP000002495">
    <property type="component" value="Chromosome"/>
</dbReference>
<dbReference type="GO" id="GO:0005737">
    <property type="term" value="C:cytoplasm"/>
    <property type="evidence" value="ECO:0007669"/>
    <property type="project" value="UniProtKB-SubCell"/>
</dbReference>
<dbReference type="GO" id="GO:0003949">
    <property type="term" value="F:1-(5-phosphoribosyl)-5-[(5-phosphoribosylamino)methylideneamino]imidazole-4-carboxamide isomerase activity"/>
    <property type="evidence" value="ECO:0007669"/>
    <property type="project" value="UniProtKB-UniRule"/>
</dbReference>
<dbReference type="GO" id="GO:0000105">
    <property type="term" value="P:L-histidine biosynthetic process"/>
    <property type="evidence" value="ECO:0007669"/>
    <property type="project" value="UniProtKB-UniRule"/>
</dbReference>
<dbReference type="GO" id="GO:0000162">
    <property type="term" value="P:L-tryptophan biosynthetic process"/>
    <property type="evidence" value="ECO:0007669"/>
    <property type="project" value="TreeGrafter"/>
</dbReference>
<dbReference type="CDD" id="cd04732">
    <property type="entry name" value="HisA"/>
    <property type="match status" value="1"/>
</dbReference>
<dbReference type="FunFam" id="3.20.20.70:FF:000009">
    <property type="entry name" value="1-(5-phosphoribosyl)-5-[(5-phosphoribosylamino)methylideneamino] imidazole-4-carboxamide isomerase"/>
    <property type="match status" value="1"/>
</dbReference>
<dbReference type="Gene3D" id="3.20.20.70">
    <property type="entry name" value="Aldolase class I"/>
    <property type="match status" value="1"/>
</dbReference>
<dbReference type="HAMAP" id="MF_01014">
    <property type="entry name" value="HisA"/>
    <property type="match status" value="1"/>
</dbReference>
<dbReference type="InterPro" id="IPR013785">
    <property type="entry name" value="Aldolase_TIM"/>
</dbReference>
<dbReference type="InterPro" id="IPR006062">
    <property type="entry name" value="His_biosynth"/>
</dbReference>
<dbReference type="InterPro" id="IPR006063">
    <property type="entry name" value="HisA_bact_arch"/>
</dbReference>
<dbReference type="InterPro" id="IPR044524">
    <property type="entry name" value="Isoase_HisA-like"/>
</dbReference>
<dbReference type="InterPro" id="IPR023016">
    <property type="entry name" value="Isoase_HisA-like_bact"/>
</dbReference>
<dbReference type="InterPro" id="IPR011060">
    <property type="entry name" value="RibuloseP-bd_barrel"/>
</dbReference>
<dbReference type="NCBIfam" id="TIGR00007">
    <property type="entry name" value="1-(5-phosphoribosyl)-5-[(5-phosphoribosylamino)methylideneamino]imidazole-4-carboxamide isomerase"/>
    <property type="match status" value="1"/>
</dbReference>
<dbReference type="PANTHER" id="PTHR43090">
    <property type="entry name" value="1-(5-PHOSPHORIBOSYL)-5-[(5-PHOSPHORIBOSYLAMINO)METHYLIDENEAMINO] IMIDAZOLE-4-CARBOXAMIDE ISOMERASE"/>
    <property type="match status" value="1"/>
</dbReference>
<dbReference type="PANTHER" id="PTHR43090:SF2">
    <property type="entry name" value="1-(5-PHOSPHORIBOSYL)-5-[(5-PHOSPHORIBOSYLAMINO)METHYLIDENEAMINO] IMIDAZOLE-4-CARBOXAMIDE ISOMERASE"/>
    <property type="match status" value="1"/>
</dbReference>
<dbReference type="Pfam" id="PF00977">
    <property type="entry name" value="His_biosynth"/>
    <property type="match status" value="1"/>
</dbReference>
<dbReference type="SUPFAM" id="SSF51366">
    <property type="entry name" value="Ribulose-phoshate binding barrel"/>
    <property type="match status" value="1"/>
</dbReference>
<name>HIS4_HELHP</name>
<comment type="catalytic activity">
    <reaction evidence="1">
        <text>1-(5-phospho-beta-D-ribosyl)-5-[(5-phospho-beta-D-ribosylamino)methylideneamino]imidazole-4-carboxamide = 5-[(5-phospho-1-deoxy-D-ribulos-1-ylimino)methylamino]-1-(5-phospho-beta-D-ribosyl)imidazole-4-carboxamide</text>
        <dbReference type="Rhea" id="RHEA:15469"/>
        <dbReference type="ChEBI" id="CHEBI:58435"/>
        <dbReference type="ChEBI" id="CHEBI:58525"/>
        <dbReference type="EC" id="5.3.1.16"/>
    </reaction>
</comment>
<comment type="pathway">
    <text evidence="1">Amino-acid biosynthesis; L-histidine biosynthesis; L-histidine from 5-phospho-alpha-D-ribose 1-diphosphate: step 4/9.</text>
</comment>
<comment type="subcellular location">
    <subcellularLocation>
        <location evidence="1">Cytoplasm</location>
    </subcellularLocation>
</comment>
<comment type="similarity">
    <text evidence="1">Belongs to the HisA/HisF family.</text>
</comment>
<reference key="1">
    <citation type="journal article" date="2003" name="Proc. Natl. Acad. Sci. U.S.A.">
        <title>The complete genome sequence of the carcinogenic bacterium Helicobacter hepaticus.</title>
        <authorList>
            <person name="Suerbaum S."/>
            <person name="Josenhans C."/>
            <person name="Sterzenbach T."/>
            <person name="Drescher B."/>
            <person name="Brandt P."/>
            <person name="Bell M."/>
            <person name="Droege M."/>
            <person name="Fartmann B."/>
            <person name="Fischer H.-P."/>
            <person name="Ge Z."/>
            <person name="Hoerster A."/>
            <person name="Holland R."/>
            <person name="Klein K."/>
            <person name="Koenig J."/>
            <person name="Macko L."/>
            <person name="Mendz G.L."/>
            <person name="Nyakatura G."/>
            <person name="Schauer D.B."/>
            <person name="Shen Z."/>
            <person name="Weber J."/>
            <person name="Frosch M."/>
            <person name="Fox J.G."/>
        </authorList>
    </citation>
    <scope>NUCLEOTIDE SEQUENCE [LARGE SCALE GENOMIC DNA]</scope>
    <source>
        <strain>ATCC 51449 / 3B1</strain>
    </source>
</reference>
<evidence type="ECO:0000255" key="1">
    <source>
        <dbReference type="HAMAP-Rule" id="MF_01014"/>
    </source>
</evidence>
<accession>Q7VHY5</accession>
<organism>
    <name type="scientific">Helicobacter hepaticus (strain ATCC 51449 / 3B1)</name>
    <dbReference type="NCBI Taxonomy" id="235279"/>
    <lineage>
        <taxon>Bacteria</taxon>
        <taxon>Pseudomonadati</taxon>
        <taxon>Campylobacterota</taxon>
        <taxon>Epsilonproteobacteria</taxon>
        <taxon>Campylobacterales</taxon>
        <taxon>Helicobacteraceae</taxon>
        <taxon>Helicobacter</taxon>
    </lineage>
</organism>
<sequence length="243" mass="26645">MALDIYPAIDLKEGKAVRLFKGDMQSATIYGEALEFAKMFEDMGAKWLHIVDLDGAFAGIPQNLKYIEEILRTTHLQIQIGGGIRNEERIRLYMDLGVSRVILGSIAIKNWEFVKTMAHSYPIAVGIDAREGKVAVQGWAKESDICSSVLAEKFAGSEVQAIICTDINRDGALSGINVSFTQDIACRSGIYTIASGGFASSNELEILDENPYISGVIIGKAFYEGKINLKEALALFENKKVKI</sequence>
<proteinExistence type="inferred from homology"/>